<organism>
    <name type="scientific">Oryza sativa subsp. japonica</name>
    <name type="common">Rice</name>
    <dbReference type="NCBI Taxonomy" id="39947"/>
    <lineage>
        <taxon>Eukaryota</taxon>
        <taxon>Viridiplantae</taxon>
        <taxon>Streptophyta</taxon>
        <taxon>Embryophyta</taxon>
        <taxon>Tracheophyta</taxon>
        <taxon>Spermatophyta</taxon>
        <taxon>Magnoliopsida</taxon>
        <taxon>Liliopsida</taxon>
        <taxon>Poales</taxon>
        <taxon>Poaceae</taxon>
        <taxon>BOP clade</taxon>
        <taxon>Oryzoideae</taxon>
        <taxon>Oryzeae</taxon>
        <taxon>Oryzinae</taxon>
        <taxon>Oryza</taxon>
        <taxon>Oryza sativa</taxon>
    </lineage>
</organism>
<sequence length="187" mass="20029">MAGVGCHFLLSLSPPLYSIRRPAAAHRPAKARSHISCCSRHDDAEACSTSKPLTNGKEEEKTTPSRRKCLACLCAVTLISASGPTMLTPNGLASDMMSKPAVCRNCNGSGAVLCDMCGGTGKWKALNRKRAKDVYLFTECPNCYGRGKLVCPVCLGTGLPNNKGLLRRPDAKKLLDKMYNGKILPDS</sequence>
<reference key="1">
    <citation type="journal article" date="2005" name="Nature">
        <title>The map-based sequence of the rice genome.</title>
        <authorList>
            <consortium name="International rice genome sequencing project (IRGSP)"/>
        </authorList>
    </citation>
    <scope>NUCLEOTIDE SEQUENCE [LARGE SCALE GENOMIC DNA]</scope>
    <source>
        <strain>cv. Nipponbare</strain>
    </source>
</reference>
<reference key="2">
    <citation type="journal article" date="2008" name="Nucleic Acids Res.">
        <title>The rice annotation project database (RAP-DB): 2008 update.</title>
        <authorList>
            <consortium name="The rice annotation project (RAP)"/>
        </authorList>
    </citation>
    <scope>GENOME REANNOTATION</scope>
    <source>
        <strain>cv. Nipponbare</strain>
    </source>
</reference>
<reference key="3">
    <citation type="journal article" date="2013" name="Rice">
        <title>Improvement of the Oryza sativa Nipponbare reference genome using next generation sequence and optical map data.</title>
        <authorList>
            <person name="Kawahara Y."/>
            <person name="de la Bastide M."/>
            <person name="Hamilton J.P."/>
            <person name="Kanamori H."/>
            <person name="McCombie W.R."/>
            <person name="Ouyang S."/>
            <person name="Schwartz D.C."/>
            <person name="Tanaka T."/>
            <person name="Wu J."/>
            <person name="Zhou S."/>
            <person name="Childs K.L."/>
            <person name="Davidson R.M."/>
            <person name="Lin H."/>
            <person name="Quesada-Ocampo L."/>
            <person name="Vaillancourt B."/>
            <person name="Sakai H."/>
            <person name="Lee S.S."/>
            <person name="Kim J."/>
            <person name="Numa H."/>
            <person name="Itoh T."/>
            <person name="Buell C.R."/>
            <person name="Matsumoto T."/>
        </authorList>
    </citation>
    <scope>GENOME REANNOTATION</scope>
    <source>
        <strain>cv. Nipponbare</strain>
    </source>
</reference>
<reference key="4">
    <citation type="journal article" date="2005" name="PLoS Biol.">
        <title>The genomes of Oryza sativa: a history of duplications.</title>
        <authorList>
            <person name="Yu J."/>
            <person name="Wang J."/>
            <person name="Lin W."/>
            <person name="Li S."/>
            <person name="Li H."/>
            <person name="Zhou J."/>
            <person name="Ni P."/>
            <person name="Dong W."/>
            <person name="Hu S."/>
            <person name="Zeng C."/>
            <person name="Zhang J."/>
            <person name="Zhang Y."/>
            <person name="Li R."/>
            <person name="Xu Z."/>
            <person name="Li S."/>
            <person name="Li X."/>
            <person name="Zheng H."/>
            <person name="Cong L."/>
            <person name="Lin L."/>
            <person name="Yin J."/>
            <person name="Geng J."/>
            <person name="Li G."/>
            <person name="Shi J."/>
            <person name="Liu J."/>
            <person name="Lv H."/>
            <person name="Li J."/>
            <person name="Wang J."/>
            <person name="Deng Y."/>
            <person name="Ran L."/>
            <person name="Shi X."/>
            <person name="Wang X."/>
            <person name="Wu Q."/>
            <person name="Li C."/>
            <person name="Ren X."/>
            <person name="Wang J."/>
            <person name="Wang X."/>
            <person name="Li D."/>
            <person name="Liu D."/>
            <person name="Zhang X."/>
            <person name="Ji Z."/>
            <person name="Zhao W."/>
            <person name="Sun Y."/>
            <person name="Zhang Z."/>
            <person name="Bao J."/>
            <person name="Han Y."/>
            <person name="Dong L."/>
            <person name="Ji J."/>
            <person name="Chen P."/>
            <person name="Wu S."/>
            <person name="Liu J."/>
            <person name="Xiao Y."/>
            <person name="Bu D."/>
            <person name="Tan J."/>
            <person name="Yang L."/>
            <person name="Ye C."/>
            <person name="Zhang J."/>
            <person name="Xu J."/>
            <person name="Zhou Y."/>
            <person name="Yu Y."/>
            <person name="Zhang B."/>
            <person name="Zhuang S."/>
            <person name="Wei H."/>
            <person name="Liu B."/>
            <person name="Lei M."/>
            <person name="Yu H."/>
            <person name="Li Y."/>
            <person name="Xu H."/>
            <person name="Wei S."/>
            <person name="He X."/>
            <person name="Fang L."/>
            <person name="Zhang Z."/>
            <person name="Zhang Y."/>
            <person name="Huang X."/>
            <person name="Su Z."/>
            <person name="Tong W."/>
            <person name="Li J."/>
            <person name="Tong Z."/>
            <person name="Li S."/>
            <person name="Ye J."/>
            <person name="Wang L."/>
            <person name="Fang L."/>
            <person name="Lei T."/>
            <person name="Chen C.-S."/>
            <person name="Chen H.-C."/>
            <person name="Xu Z."/>
            <person name="Li H."/>
            <person name="Huang H."/>
            <person name="Zhang F."/>
            <person name="Xu H."/>
            <person name="Li N."/>
            <person name="Zhao C."/>
            <person name="Li S."/>
            <person name="Dong L."/>
            <person name="Huang Y."/>
            <person name="Li L."/>
            <person name="Xi Y."/>
            <person name="Qi Q."/>
            <person name="Li W."/>
            <person name="Zhang B."/>
            <person name="Hu W."/>
            <person name="Zhang Y."/>
            <person name="Tian X."/>
            <person name="Jiao Y."/>
            <person name="Liang X."/>
            <person name="Jin J."/>
            <person name="Gao L."/>
            <person name="Zheng W."/>
            <person name="Hao B."/>
            <person name="Liu S.-M."/>
            <person name="Wang W."/>
            <person name="Yuan L."/>
            <person name="Cao M."/>
            <person name="McDermott J."/>
            <person name="Samudrala R."/>
            <person name="Wang J."/>
            <person name="Wong G.K.-S."/>
            <person name="Yang H."/>
        </authorList>
    </citation>
    <scope>NUCLEOTIDE SEQUENCE [LARGE SCALE GENOMIC DNA]</scope>
    <source>
        <strain>cv. Nipponbare</strain>
    </source>
</reference>
<reference key="5">
    <citation type="journal article" date="2003" name="Science">
        <title>Collection, mapping, and annotation of over 28,000 cDNA clones from japonica rice.</title>
        <authorList>
            <consortium name="The rice full-length cDNA consortium"/>
        </authorList>
    </citation>
    <scope>NUCLEOTIDE SEQUENCE [LARGE SCALE MRNA]</scope>
    <source>
        <strain>cv. Nipponbare</strain>
    </source>
</reference>
<dbReference type="EMBL" id="AP005405">
    <property type="protein sequence ID" value="BAD10316.1"/>
    <property type="molecule type" value="Genomic_DNA"/>
</dbReference>
<dbReference type="EMBL" id="AP005871">
    <property type="protein sequence ID" value="BAD10692.1"/>
    <property type="molecule type" value="Genomic_DNA"/>
</dbReference>
<dbReference type="EMBL" id="AP008214">
    <property type="protein sequence ID" value="BAF23905.1"/>
    <property type="molecule type" value="Genomic_DNA"/>
</dbReference>
<dbReference type="EMBL" id="AP014964">
    <property type="protein sequence ID" value="BAT05786.1"/>
    <property type="molecule type" value="Genomic_DNA"/>
</dbReference>
<dbReference type="EMBL" id="CM000145">
    <property type="protein sequence ID" value="EEE68827.1"/>
    <property type="molecule type" value="Genomic_DNA"/>
</dbReference>
<dbReference type="EMBL" id="AK120178">
    <property type="protein sequence ID" value="BAG99902.1"/>
    <property type="molecule type" value="mRNA"/>
</dbReference>
<dbReference type="SMR" id="Q6YUA8"/>
<dbReference type="FunCoup" id="Q6YUA8">
    <property type="interactions" value="2394"/>
</dbReference>
<dbReference type="STRING" id="39947.Q6YUA8"/>
<dbReference type="PaxDb" id="39947-Q6YUA8"/>
<dbReference type="EnsemblPlants" id="Os08t0463900-01">
    <property type="protein sequence ID" value="Os08t0463900-01"/>
    <property type="gene ID" value="Os08g0463900"/>
</dbReference>
<dbReference type="Gramene" id="Os08t0463900-01">
    <property type="protein sequence ID" value="Os08t0463900-01"/>
    <property type="gene ID" value="Os08g0463900"/>
</dbReference>
<dbReference type="KEGG" id="dosa:Os08g0463900"/>
<dbReference type="KEGG" id="osa:4345779"/>
<dbReference type="eggNOG" id="ENOG502RZYB">
    <property type="taxonomic scope" value="Eukaryota"/>
</dbReference>
<dbReference type="HOGENOM" id="CLU_072197_1_0_1"/>
<dbReference type="InParanoid" id="Q6YUA8"/>
<dbReference type="OMA" id="WGSYLNP"/>
<dbReference type="OrthoDB" id="513375at2759"/>
<dbReference type="Proteomes" id="UP000000763">
    <property type="component" value="Chromosome 8"/>
</dbReference>
<dbReference type="Proteomes" id="UP000007752">
    <property type="component" value="Chromosome 8"/>
</dbReference>
<dbReference type="Proteomes" id="UP000059680">
    <property type="component" value="Chromosome 8"/>
</dbReference>
<dbReference type="GO" id="GO:0009507">
    <property type="term" value="C:chloroplast"/>
    <property type="evidence" value="ECO:0000318"/>
    <property type="project" value="GO_Central"/>
</dbReference>
<dbReference type="GO" id="GO:0009543">
    <property type="term" value="C:chloroplast thylakoid lumen"/>
    <property type="evidence" value="ECO:0007669"/>
    <property type="project" value="UniProtKB-SubCell"/>
</dbReference>
<dbReference type="GO" id="GO:0031977">
    <property type="term" value="C:thylakoid lumen"/>
    <property type="evidence" value="ECO:0000250"/>
    <property type="project" value="UniProtKB"/>
</dbReference>
<dbReference type="GO" id="GO:0047134">
    <property type="term" value="F:protein-disulfide reductase [NAD(P)H] activity"/>
    <property type="evidence" value="ECO:0000318"/>
    <property type="project" value="GO_Central"/>
</dbReference>
<dbReference type="GO" id="GO:0008270">
    <property type="term" value="F:zinc ion binding"/>
    <property type="evidence" value="ECO:0007669"/>
    <property type="project" value="UniProtKB-KW"/>
</dbReference>
<dbReference type="GO" id="GO:0048564">
    <property type="term" value="P:photosystem I assembly"/>
    <property type="evidence" value="ECO:0000250"/>
    <property type="project" value="UniProtKB"/>
</dbReference>
<dbReference type="Gene3D" id="2.10.230.10">
    <property type="entry name" value="Heat shock protein DnaJ, cysteine-rich domain"/>
    <property type="match status" value="1"/>
</dbReference>
<dbReference type="InterPro" id="IPR036410">
    <property type="entry name" value="HSP_DnaJ_Cys-rich_dom_sf"/>
</dbReference>
<dbReference type="PANTHER" id="PTHR15852">
    <property type="entry name" value="PLASTID TRANSCRIPTIONALLY ACTIVE PROTEIN"/>
    <property type="match status" value="1"/>
</dbReference>
<dbReference type="PANTHER" id="PTHR15852:SF56">
    <property type="entry name" value="PROTEIN PHOTOSYSTEM I ASSEMBLY 2, CHLOROPLASTIC"/>
    <property type="match status" value="1"/>
</dbReference>
<dbReference type="SUPFAM" id="SSF57938">
    <property type="entry name" value="DnaJ/Hsp40 cysteine-rich domain"/>
    <property type="match status" value="1"/>
</dbReference>
<accession>Q6YUA8</accession>
<keyword id="KW-0150">Chloroplast</keyword>
<keyword id="KW-0479">Metal-binding</keyword>
<keyword id="KW-0934">Plastid</keyword>
<keyword id="KW-1185">Reference proteome</keyword>
<keyword id="KW-0677">Repeat</keyword>
<keyword id="KW-0793">Thylakoid</keyword>
<keyword id="KW-0809">Transit peptide</keyword>
<keyword id="KW-0862">Zinc</keyword>
<keyword id="KW-0863">Zinc-finger</keyword>
<name>PSA22_ORYSJ</name>
<gene>
    <name evidence="5" type="primary">PSA2</name>
    <name evidence="8" type="ordered locus">Os08g0463900</name>
    <name evidence="5" type="ordered locus">LOC_Os08g36140</name>
    <name evidence="6" type="ORF">B1111C03.36</name>
    <name evidence="7" type="ORF">B1116H04.24</name>
    <name evidence="9" type="ORF">OsJ_27600</name>
</gene>
<evidence type="ECO:0000250" key="1">
    <source>
        <dbReference type="UniProtKB" id="A0A1D6KL43"/>
    </source>
</evidence>
<evidence type="ECO:0000250" key="2">
    <source>
        <dbReference type="UniProtKB" id="Q6A662"/>
    </source>
</evidence>
<evidence type="ECO:0000255" key="3"/>
<evidence type="ECO:0000255" key="4">
    <source>
        <dbReference type="PROSITE-ProRule" id="PRU00546"/>
    </source>
</evidence>
<evidence type="ECO:0000305" key="5"/>
<evidence type="ECO:0000312" key="6">
    <source>
        <dbReference type="EMBL" id="BAD10316.1"/>
    </source>
</evidence>
<evidence type="ECO:0000312" key="7">
    <source>
        <dbReference type="EMBL" id="BAD10692.1"/>
    </source>
</evidence>
<evidence type="ECO:0000312" key="8">
    <source>
        <dbReference type="EMBL" id="BAF23905.1"/>
    </source>
</evidence>
<evidence type="ECO:0000312" key="9">
    <source>
        <dbReference type="EMBL" id="EEE68827.1"/>
    </source>
</evidence>
<comment type="function">
    <text evidence="1">Nuclear genome-encoded factor required for the accumulation of photosystem I (PSI) during plant development.</text>
</comment>
<comment type="subcellular location">
    <subcellularLocation>
        <location evidence="1">Plastid</location>
        <location evidence="1">Chloroplast thylakoid lumen</location>
    </subcellularLocation>
</comment>
<protein>
    <recommendedName>
        <fullName evidence="5">Protein PHOTOSYSTEM I ASSEMBLY 2, chloroplastic</fullName>
    </recommendedName>
</protein>
<proteinExistence type="evidence at transcript level"/>
<feature type="transit peptide" description="Chloroplast" evidence="3">
    <location>
        <begin position="1"/>
        <end position="94"/>
    </location>
</feature>
<feature type="chain" id="PRO_0000441340" description="Protein PHOTOSYSTEM I ASSEMBLY 2, chloroplastic">
    <location>
        <begin position="95"/>
        <end position="187"/>
    </location>
</feature>
<feature type="repeat" description="CXXCXGXG motif" evidence="2">
    <location>
        <begin position="103"/>
        <end position="110"/>
    </location>
</feature>
<feature type="repeat" description="CXXCXGXG motif" evidence="2">
    <location>
        <begin position="114"/>
        <end position="121"/>
    </location>
</feature>
<feature type="repeat" description="CXXCXGXG motif" evidence="2">
    <location>
        <begin position="140"/>
        <end position="147"/>
    </location>
</feature>
<feature type="repeat" description="CXXCXGXG motif" evidence="2">
    <location>
        <begin position="151"/>
        <end position="158"/>
    </location>
</feature>
<feature type="zinc finger region" description="CR-type" evidence="4">
    <location>
        <begin position="90"/>
        <end position="163"/>
    </location>
</feature>